<protein>
    <recommendedName>
        <fullName>Tumor necrosis factor ligand superfamily member 9</fullName>
    </recommendedName>
    <alternativeName>
        <fullName>4-1BB ligand</fullName>
        <shortName>4-1BBL</shortName>
    </alternativeName>
</protein>
<sequence length="309" mass="33853">MDQHTLDVEDTADARHPAGTSCPSDAALLRDTGLLADAALLSDTVRPTNAALPTDAAYPAVNVRDREAAWPPALNFCSRHPKLYGLVALVLLLLIAACVPIFTRTEPRPALTITTSPNLGTRENNADQVTPVSHIGCPNTTQQGSPVFAKLLAKNQASLCNTTLNWHSQDGAGSSYLSQGLRYEEDKKELVVDSPGLYYVFLELKLSPTFTNTGHKVQGWVSLVLQAKPQVDDFDNLALTVELFPCSMENKLVDRSWSQLLLLKAGHRLSVGLRAYLHGAQDAYRDWELSYPNTTSFGLFLVKPDNPWE</sequence>
<name>TNFL9_MOUSE</name>
<feature type="chain" id="PRO_0000185502" description="Tumor necrosis factor ligand superfamily member 9">
    <location>
        <begin position="1"/>
        <end position="309"/>
    </location>
</feature>
<feature type="topological domain" description="Cytoplasmic" evidence="1">
    <location>
        <begin position="1"/>
        <end position="82"/>
    </location>
</feature>
<feature type="transmembrane region" description="Helical; Signal-anchor for type II membrane protein" evidence="1">
    <location>
        <begin position="83"/>
        <end position="103"/>
    </location>
</feature>
<feature type="topological domain" description="Extracellular" evidence="1">
    <location>
        <begin position="104"/>
        <end position="309"/>
    </location>
</feature>
<feature type="domain" description="THD" evidence="2">
    <location>
        <begin position="147"/>
        <end position="302"/>
    </location>
</feature>
<feature type="region of interest" description="Disordered" evidence="3">
    <location>
        <begin position="1"/>
        <end position="20"/>
    </location>
</feature>
<feature type="compositionally biased region" description="Basic and acidic residues" evidence="3">
    <location>
        <begin position="1"/>
        <end position="16"/>
    </location>
</feature>
<feature type="glycosylation site" description="N-linked (GlcNAc...) asparagine" evidence="1">
    <location>
        <position position="139"/>
    </location>
</feature>
<feature type="glycosylation site" description="N-linked (GlcNAc...) asparagine" evidence="1">
    <location>
        <position position="161"/>
    </location>
</feature>
<feature type="glycosylation site" description="N-linked (GlcNAc...) asparagine" evidence="1">
    <location>
        <position position="293"/>
    </location>
</feature>
<feature type="strand" evidence="5">
    <location>
        <begin position="148"/>
        <end position="153"/>
    </location>
</feature>
<feature type="strand" evidence="5">
    <location>
        <begin position="156"/>
        <end position="158"/>
    </location>
</feature>
<feature type="strand" evidence="5">
    <location>
        <begin position="161"/>
        <end position="163"/>
    </location>
</feature>
<feature type="strand" evidence="5">
    <location>
        <begin position="166"/>
        <end position="169"/>
    </location>
</feature>
<feature type="strand" evidence="5">
    <location>
        <begin position="171"/>
        <end position="173"/>
    </location>
</feature>
<feature type="strand" evidence="5">
    <location>
        <begin position="175"/>
        <end position="177"/>
    </location>
</feature>
<feature type="strand" evidence="5">
    <location>
        <begin position="181"/>
        <end position="184"/>
    </location>
</feature>
<feature type="turn" evidence="5">
    <location>
        <begin position="185"/>
        <end position="188"/>
    </location>
</feature>
<feature type="strand" evidence="5">
    <location>
        <begin position="189"/>
        <end position="192"/>
    </location>
</feature>
<feature type="strand" evidence="5">
    <location>
        <begin position="196"/>
        <end position="208"/>
    </location>
</feature>
<feature type="strand" evidence="5">
    <location>
        <begin position="218"/>
        <end position="229"/>
    </location>
</feature>
<feature type="strand" evidence="5">
    <location>
        <begin position="238"/>
        <end position="243"/>
    </location>
</feature>
<feature type="helix" evidence="6">
    <location>
        <begin position="247"/>
        <end position="249"/>
    </location>
</feature>
<feature type="strand" evidence="5">
    <location>
        <begin position="253"/>
        <end position="263"/>
    </location>
</feature>
<feature type="strand" evidence="5">
    <location>
        <begin position="267"/>
        <end position="280"/>
    </location>
</feature>
<feature type="helix" evidence="5">
    <location>
        <begin position="283"/>
        <end position="286"/>
    </location>
</feature>
<feature type="strand" evidence="5">
    <location>
        <begin position="287"/>
        <end position="289"/>
    </location>
</feature>
<feature type="strand" evidence="5">
    <location>
        <begin position="291"/>
        <end position="293"/>
    </location>
</feature>
<feature type="strand" evidence="5">
    <location>
        <begin position="296"/>
        <end position="305"/>
    </location>
</feature>
<reference key="1">
    <citation type="journal article" date="1993" name="Eur. J. Immunol.">
        <title>Molecular cloning of a ligand for the inducible T cell gene 4-1BB: a member of an emerging family of cytokines with homology to tumor necrosis factor.</title>
        <authorList>
            <person name="Goodwin R.G."/>
            <person name="Din W.S."/>
            <person name="Davis-Smith T."/>
            <person name="Anderson D.M."/>
            <person name="Gimpel S.D."/>
            <person name="Sato T.A."/>
            <person name="Maliszewski C.R."/>
            <person name="Brannan C.I."/>
            <person name="Copeland N.G."/>
            <person name="Jenkins N.A."/>
            <person name="Farrah T."/>
            <person name="Armitage R.J."/>
            <person name="Fanslow W.C."/>
            <person name="Smith C.A."/>
        </authorList>
    </citation>
    <scope>NUCLEOTIDE SEQUENCE [GENOMIC DNA]</scope>
    <source>
        <tissue>T-cell</tissue>
    </source>
</reference>
<proteinExistence type="evidence at protein level"/>
<keyword id="KW-0002">3D-structure</keyword>
<keyword id="KW-0202">Cytokine</keyword>
<keyword id="KW-0325">Glycoprotein</keyword>
<keyword id="KW-0472">Membrane</keyword>
<keyword id="KW-1185">Reference proteome</keyword>
<keyword id="KW-0735">Signal-anchor</keyword>
<keyword id="KW-0812">Transmembrane</keyword>
<keyword id="KW-1133">Transmembrane helix</keyword>
<dbReference type="EMBL" id="L15435">
    <property type="protein sequence ID" value="AAA39435.1"/>
    <property type="molecule type" value="Genomic_DNA"/>
</dbReference>
<dbReference type="CCDS" id="CCDS28926.1"/>
<dbReference type="PIR" id="I53384">
    <property type="entry name" value="I53384"/>
</dbReference>
<dbReference type="RefSeq" id="NP_033430.1">
    <property type="nucleotide sequence ID" value="NM_009404.3"/>
</dbReference>
<dbReference type="PDB" id="6MKB">
    <property type="method" value="X-ray"/>
    <property type="resolution" value="2.50 A"/>
    <property type="chains" value="A/B/C/D=139-309"/>
</dbReference>
<dbReference type="PDB" id="6MKZ">
    <property type="method" value="X-ray"/>
    <property type="resolution" value="2.65 A"/>
    <property type="chains" value="A/C=139-309"/>
</dbReference>
<dbReference type="PDBsum" id="6MKB"/>
<dbReference type="PDBsum" id="6MKZ"/>
<dbReference type="SMR" id="P41274"/>
<dbReference type="BioGRID" id="204262">
    <property type="interactions" value="1"/>
</dbReference>
<dbReference type="DIP" id="DIP-1153N"/>
<dbReference type="FunCoup" id="P41274">
    <property type="interactions" value="687"/>
</dbReference>
<dbReference type="STRING" id="10090.ENSMUSP00000040412"/>
<dbReference type="GlyCosmos" id="P41274">
    <property type="glycosylation" value="3 sites, No reported glycans"/>
</dbReference>
<dbReference type="GlyGen" id="P41274">
    <property type="glycosylation" value="3 sites"/>
</dbReference>
<dbReference type="iPTMnet" id="P41274"/>
<dbReference type="PhosphoSitePlus" id="P41274"/>
<dbReference type="SwissPalm" id="P41274"/>
<dbReference type="PaxDb" id="10090-ENSMUSP00000040412"/>
<dbReference type="PeptideAtlas" id="P41274"/>
<dbReference type="ProteomicsDB" id="258792"/>
<dbReference type="Antibodypedia" id="24211">
    <property type="antibodies" value="699 antibodies from 41 providers"/>
</dbReference>
<dbReference type="DNASU" id="21950"/>
<dbReference type="Ensembl" id="ENSMUST00000039490.9">
    <property type="protein sequence ID" value="ENSMUSP00000040412.8"/>
    <property type="gene ID" value="ENSMUSG00000035678.9"/>
</dbReference>
<dbReference type="GeneID" id="21950"/>
<dbReference type="KEGG" id="mmu:21950"/>
<dbReference type="UCSC" id="uc008ded.1">
    <property type="organism name" value="mouse"/>
</dbReference>
<dbReference type="AGR" id="MGI:1101058"/>
<dbReference type="CTD" id="8744"/>
<dbReference type="MGI" id="MGI:1101058">
    <property type="gene designation" value="Tnfsf9"/>
</dbReference>
<dbReference type="VEuPathDB" id="HostDB:ENSMUSG00000035678"/>
<dbReference type="eggNOG" id="ENOG502SSK0">
    <property type="taxonomic scope" value="Eukaryota"/>
</dbReference>
<dbReference type="GeneTree" id="ENSGT00390000006244"/>
<dbReference type="HOGENOM" id="CLU_903042_0_0_1"/>
<dbReference type="InParanoid" id="P41274"/>
<dbReference type="OMA" id="VELFPCS"/>
<dbReference type="OrthoDB" id="9450706at2759"/>
<dbReference type="PhylomeDB" id="P41274"/>
<dbReference type="TreeFam" id="TF338523"/>
<dbReference type="Reactome" id="R-MMU-5669034">
    <property type="pathway name" value="TNFs bind their physiological receptors"/>
</dbReference>
<dbReference type="BioGRID-ORCS" id="21950">
    <property type="hits" value="5 hits in 82 CRISPR screens"/>
</dbReference>
<dbReference type="PRO" id="PR:P41274"/>
<dbReference type="Proteomes" id="UP000000589">
    <property type="component" value="Chromosome 17"/>
</dbReference>
<dbReference type="RNAct" id="P41274">
    <property type="molecule type" value="protein"/>
</dbReference>
<dbReference type="Bgee" id="ENSMUSG00000035678">
    <property type="expression patterns" value="Expressed in gastrula and 97 other cell types or tissues"/>
</dbReference>
<dbReference type="ExpressionAtlas" id="P41274">
    <property type="expression patterns" value="baseline and differential"/>
</dbReference>
<dbReference type="GO" id="GO:0005615">
    <property type="term" value="C:extracellular space"/>
    <property type="evidence" value="ECO:0007669"/>
    <property type="project" value="UniProtKB-KW"/>
</dbReference>
<dbReference type="GO" id="GO:0005886">
    <property type="term" value="C:plasma membrane"/>
    <property type="evidence" value="ECO:0000314"/>
    <property type="project" value="MGI"/>
</dbReference>
<dbReference type="GO" id="GO:0005125">
    <property type="term" value="F:cytokine activity"/>
    <property type="evidence" value="ECO:0007669"/>
    <property type="project" value="UniProtKB-KW"/>
</dbReference>
<dbReference type="GO" id="GO:0005102">
    <property type="term" value="F:signaling receptor binding"/>
    <property type="evidence" value="ECO:0000353"/>
    <property type="project" value="MGI"/>
</dbReference>
<dbReference type="GO" id="GO:0005164">
    <property type="term" value="F:tumor necrosis factor receptor binding"/>
    <property type="evidence" value="ECO:0007669"/>
    <property type="project" value="InterPro"/>
</dbReference>
<dbReference type="GO" id="GO:0032813">
    <property type="term" value="F:tumor necrosis factor receptor superfamily binding"/>
    <property type="evidence" value="ECO:0000353"/>
    <property type="project" value="MGI"/>
</dbReference>
<dbReference type="GO" id="GO:0006955">
    <property type="term" value="P:immune response"/>
    <property type="evidence" value="ECO:0007669"/>
    <property type="project" value="InterPro"/>
</dbReference>
<dbReference type="GO" id="GO:0043011">
    <property type="term" value="P:myeloid dendritic cell differentiation"/>
    <property type="evidence" value="ECO:0007669"/>
    <property type="project" value="Ensembl"/>
</dbReference>
<dbReference type="GO" id="GO:0042104">
    <property type="term" value="P:positive regulation of activated T cell proliferation"/>
    <property type="evidence" value="ECO:0007669"/>
    <property type="project" value="Ensembl"/>
</dbReference>
<dbReference type="GO" id="GO:0045585">
    <property type="term" value="P:positive regulation of cytotoxic T cell differentiation"/>
    <property type="evidence" value="ECO:0007669"/>
    <property type="project" value="Ensembl"/>
</dbReference>
<dbReference type="GO" id="GO:0032735">
    <property type="term" value="P:positive regulation of interleukin-12 production"/>
    <property type="evidence" value="ECO:0007669"/>
    <property type="project" value="Ensembl"/>
</dbReference>
<dbReference type="GO" id="GO:0032755">
    <property type="term" value="P:positive regulation of interleukin-6 production"/>
    <property type="evidence" value="ECO:0007669"/>
    <property type="project" value="Ensembl"/>
</dbReference>
<dbReference type="GO" id="GO:0032729">
    <property type="term" value="P:positive regulation of type II interferon production"/>
    <property type="evidence" value="ECO:0007669"/>
    <property type="project" value="Ensembl"/>
</dbReference>
<dbReference type="GO" id="GO:0033084">
    <property type="term" value="P:regulation of immature T cell proliferation in thymus"/>
    <property type="evidence" value="ECO:0000314"/>
    <property type="project" value="MGI"/>
</dbReference>
<dbReference type="CDD" id="cd00184">
    <property type="entry name" value="TNF"/>
    <property type="match status" value="1"/>
</dbReference>
<dbReference type="FunFam" id="2.60.120.40:FF:000042">
    <property type="entry name" value="Tumor necrosis factor ligand superfamily member 9"/>
    <property type="match status" value="1"/>
</dbReference>
<dbReference type="Gene3D" id="2.60.120.40">
    <property type="match status" value="1"/>
</dbReference>
<dbReference type="InterPro" id="IPR021184">
    <property type="entry name" value="TNF_CS"/>
</dbReference>
<dbReference type="InterPro" id="IPR006052">
    <property type="entry name" value="TNF_dom"/>
</dbReference>
<dbReference type="InterPro" id="IPR042373">
    <property type="entry name" value="TNFSF9"/>
</dbReference>
<dbReference type="InterPro" id="IPR008983">
    <property type="entry name" value="Tumour_necrosis_fac-like_dom"/>
</dbReference>
<dbReference type="PANTHER" id="PTHR15153">
    <property type="entry name" value="TUMOR NECROSIS FACTOR LIGAND SUPERFAMILY MEMBER 9"/>
    <property type="match status" value="1"/>
</dbReference>
<dbReference type="PANTHER" id="PTHR15153:SF0">
    <property type="entry name" value="TUMOR NECROSIS FACTOR LIGAND SUPERFAMILY MEMBER 9"/>
    <property type="match status" value="1"/>
</dbReference>
<dbReference type="Pfam" id="PF00229">
    <property type="entry name" value="TNF"/>
    <property type="match status" value="1"/>
</dbReference>
<dbReference type="SMART" id="SM00207">
    <property type="entry name" value="TNF"/>
    <property type="match status" value="1"/>
</dbReference>
<dbReference type="SUPFAM" id="SSF49842">
    <property type="entry name" value="TNF-like"/>
    <property type="match status" value="1"/>
</dbReference>
<dbReference type="PROSITE" id="PS00251">
    <property type="entry name" value="THD_1"/>
    <property type="match status" value="1"/>
</dbReference>
<dbReference type="PROSITE" id="PS50049">
    <property type="entry name" value="THD_2"/>
    <property type="match status" value="1"/>
</dbReference>
<accession>P41274</accession>
<comment type="function">
    <text>Cytokine that binds to TNFRSF9. Induces the proliferation of activated peripheral blood T-cells. May have a role in activation-induced cell death (AICD). May play a role in cognate interactions between T-cells and B-cells/macrophages.</text>
</comment>
<comment type="subunit">
    <text evidence="4">Homotrimer.</text>
</comment>
<comment type="subcellular location">
    <subcellularLocation>
        <location>Membrane</location>
        <topology>Single-pass type II membrane protein</topology>
    </subcellularLocation>
</comment>
<comment type="similarity">
    <text evidence="4">Belongs to the tumor necrosis factor family.</text>
</comment>
<organism>
    <name type="scientific">Mus musculus</name>
    <name type="common">Mouse</name>
    <dbReference type="NCBI Taxonomy" id="10090"/>
    <lineage>
        <taxon>Eukaryota</taxon>
        <taxon>Metazoa</taxon>
        <taxon>Chordata</taxon>
        <taxon>Craniata</taxon>
        <taxon>Vertebrata</taxon>
        <taxon>Euteleostomi</taxon>
        <taxon>Mammalia</taxon>
        <taxon>Eutheria</taxon>
        <taxon>Euarchontoglires</taxon>
        <taxon>Glires</taxon>
        <taxon>Rodentia</taxon>
        <taxon>Myomorpha</taxon>
        <taxon>Muroidea</taxon>
        <taxon>Muridae</taxon>
        <taxon>Murinae</taxon>
        <taxon>Mus</taxon>
        <taxon>Mus</taxon>
    </lineage>
</organism>
<gene>
    <name type="primary">Tnfsf9</name>
    <name type="synonym">Cd137l</name>
    <name type="synonym">Cd157l</name>
    <name type="synonym">Ly63l</name>
</gene>
<evidence type="ECO:0000255" key="1"/>
<evidence type="ECO:0000255" key="2">
    <source>
        <dbReference type="PROSITE-ProRule" id="PRU01387"/>
    </source>
</evidence>
<evidence type="ECO:0000256" key="3">
    <source>
        <dbReference type="SAM" id="MobiDB-lite"/>
    </source>
</evidence>
<evidence type="ECO:0000305" key="4"/>
<evidence type="ECO:0007829" key="5">
    <source>
        <dbReference type="PDB" id="6MKB"/>
    </source>
</evidence>
<evidence type="ECO:0007829" key="6">
    <source>
        <dbReference type="PDB" id="6MKZ"/>
    </source>
</evidence>